<organism>
    <name type="scientific">Yersinia pestis bv. Antiqua (strain Antiqua)</name>
    <dbReference type="NCBI Taxonomy" id="360102"/>
    <lineage>
        <taxon>Bacteria</taxon>
        <taxon>Pseudomonadati</taxon>
        <taxon>Pseudomonadota</taxon>
        <taxon>Gammaproteobacteria</taxon>
        <taxon>Enterobacterales</taxon>
        <taxon>Yersiniaceae</taxon>
        <taxon>Yersinia</taxon>
    </lineage>
</organism>
<comment type="function">
    <text evidence="1">Catalyzes the interconversion of L-rhamnose and L-rhamnulose.</text>
</comment>
<comment type="catalytic activity">
    <reaction evidence="1">
        <text>L-rhamnopyranose = L-rhamnulose</text>
        <dbReference type="Rhea" id="RHEA:23160"/>
        <dbReference type="ChEBI" id="CHEBI:17897"/>
        <dbReference type="ChEBI" id="CHEBI:62346"/>
        <dbReference type="EC" id="5.3.1.14"/>
    </reaction>
</comment>
<comment type="cofactor">
    <cofactor evidence="1">
        <name>Mn(2+)</name>
        <dbReference type="ChEBI" id="CHEBI:29035"/>
    </cofactor>
    <text evidence="1">Binds 1 Mn(2+) ion per subunit.</text>
</comment>
<comment type="pathway">
    <text evidence="1">Carbohydrate degradation; L-rhamnose degradation; glycerone phosphate from L-rhamnose: step 1/3.</text>
</comment>
<comment type="subunit">
    <text evidence="1">Homotetramer.</text>
</comment>
<comment type="subcellular location">
    <subcellularLocation>
        <location evidence="1">Cytoplasm</location>
    </subcellularLocation>
</comment>
<comment type="similarity">
    <text evidence="1">Belongs to the rhamnose isomerase family.</text>
</comment>
<accession>Q1C0V8</accession>
<sequence>MTNSIEQAWDLAKQRFAAVGVDVDAALTRLDTLPVSMHCWQGDDVTGFEDPDGVLTGGIQATGNYPGKARNATELRSDLELALALIPGPKRLNLHAIYLESDTPVARNKIEPRHFSHWVAWAKKHQLGLDFNPSCFSHPLSADGFTLSHADPEIRQFWIEHCQASRRVSAYFGEQLGTPSVMNIWIPDGMKDTPIDRLAPRQRLLSALDEVISEKLNPAHHIDAVESKLFGIGAESYTVGSNEFYMGYAASRQTALCLDAGHFHPTEVISDKISSAMLYVPRLLLHVSRPVRWDSDHVVLLDDETQAIASEIIRHNLFDRVHIGLDFFDASINRIAAWVIGTRNMKKALLRALLEPTDRLRQLELRGDYTARLALLEEQKSLPWQAIWEGYCQRNDVPVDARWLDAVREYEQQILSQR</sequence>
<evidence type="ECO:0000255" key="1">
    <source>
        <dbReference type="HAMAP-Rule" id="MF_00541"/>
    </source>
</evidence>
<dbReference type="EC" id="5.3.1.14" evidence="1"/>
<dbReference type="EMBL" id="CP000308">
    <property type="protein sequence ID" value="ABG15914.1"/>
    <property type="molecule type" value="Genomic_DNA"/>
</dbReference>
<dbReference type="RefSeq" id="WP_002209104.1">
    <property type="nucleotide sequence ID" value="NZ_CP009906.1"/>
</dbReference>
<dbReference type="SMR" id="Q1C0V8"/>
<dbReference type="KEGG" id="ypa:YPA_3953"/>
<dbReference type="UniPathway" id="UPA00541">
    <property type="reaction ID" value="UER00601"/>
</dbReference>
<dbReference type="Proteomes" id="UP000001971">
    <property type="component" value="Chromosome"/>
</dbReference>
<dbReference type="GO" id="GO:0005737">
    <property type="term" value="C:cytoplasm"/>
    <property type="evidence" value="ECO:0007669"/>
    <property type="project" value="UniProtKB-SubCell"/>
</dbReference>
<dbReference type="GO" id="GO:0008740">
    <property type="term" value="F:L-rhamnose isomerase activity"/>
    <property type="evidence" value="ECO:0007669"/>
    <property type="project" value="UniProtKB-UniRule"/>
</dbReference>
<dbReference type="GO" id="GO:0030145">
    <property type="term" value="F:manganese ion binding"/>
    <property type="evidence" value="ECO:0007669"/>
    <property type="project" value="UniProtKB-UniRule"/>
</dbReference>
<dbReference type="GO" id="GO:0019324">
    <property type="term" value="P:L-lyxose metabolic process"/>
    <property type="evidence" value="ECO:0007669"/>
    <property type="project" value="TreeGrafter"/>
</dbReference>
<dbReference type="GO" id="GO:0019301">
    <property type="term" value="P:rhamnose catabolic process"/>
    <property type="evidence" value="ECO:0007669"/>
    <property type="project" value="UniProtKB-UniRule"/>
</dbReference>
<dbReference type="FunFam" id="3.20.20.150:FF:000006">
    <property type="entry name" value="L-rhamnose isomerase"/>
    <property type="match status" value="1"/>
</dbReference>
<dbReference type="Gene3D" id="3.20.20.150">
    <property type="entry name" value="Divalent-metal-dependent TIM barrel enzymes"/>
    <property type="match status" value="1"/>
</dbReference>
<dbReference type="HAMAP" id="MF_00541">
    <property type="entry name" value="RhaA"/>
    <property type="match status" value="1"/>
</dbReference>
<dbReference type="InterPro" id="IPR050337">
    <property type="entry name" value="L-rhamnose_isomerase"/>
</dbReference>
<dbReference type="InterPro" id="IPR009308">
    <property type="entry name" value="Rhamnose_isomerase"/>
</dbReference>
<dbReference type="InterPro" id="IPR036237">
    <property type="entry name" value="Xyl_isomerase-like_sf"/>
</dbReference>
<dbReference type="NCBIfam" id="NF002203">
    <property type="entry name" value="PRK01076.1"/>
    <property type="match status" value="1"/>
</dbReference>
<dbReference type="NCBIfam" id="TIGR01748">
    <property type="entry name" value="rhaA"/>
    <property type="match status" value="1"/>
</dbReference>
<dbReference type="PANTHER" id="PTHR30268">
    <property type="entry name" value="L-RHAMNOSE ISOMERASE"/>
    <property type="match status" value="1"/>
</dbReference>
<dbReference type="PANTHER" id="PTHR30268:SF0">
    <property type="entry name" value="L-RHAMNOSE ISOMERASE"/>
    <property type="match status" value="1"/>
</dbReference>
<dbReference type="Pfam" id="PF06134">
    <property type="entry name" value="RhaA"/>
    <property type="match status" value="1"/>
</dbReference>
<dbReference type="SUPFAM" id="SSF51658">
    <property type="entry name" value="Xylose isomerase-like"/>
    <property type="match status" value="1"/>
</dbReference>
<gene>
    <name evidence="1" type="primary">rhaA</name>
    <name type="ordered locus">YPA_3953</name>
</gene>
<reference key="1">
    <citation type="journal article" date="2006" name="J. Bacteriol.">
        <title>Complete genome sequence of Yersinia pestis strains Antiqua and Nepal516: evidence of gene reduction in an emerging pathogen.</title>
        <authorList>
            <person name="Chain P.S.G."/>
            <person name="Hu P."/>
            <person name="Malfatti S.A."/>
            <person name="Radnedge L."/>
            <person name="Larimer F."/>
            <person name="Vergez L.M."/>
            <person name="Worsham P."/>
            <person name="Chu M.C."/>
            <person name="Andersen G.L."/>
        </authorList>
    </citation>
    <scope>NUCLEOTIDE SEQUENCE [LARGE SCALE GENOMIC DNA]</scope>
    <source>
        <strain>Antiqua</strain>
    </source>
</reference>
<keyword id="KW-0963">Cytoplasm</keyword>
<keyword id="KW-0413">Isomerase</keyword>
<keyword id="KW-0464">Manganese</keyword>
<keyword id="KW-0479">Metal-binding</keyword>
<keyword id="KW-0684">Rhamnose metabolism</keyword>
<name>RHAA_YERPA</name>
<proteinExistence type="inferred from homology"/>
<feature type="chain" id="PRO_1000017724" description="L-rhamnose isomerase">
    <location>
        <begin position="1"/>
        <end position="418"/>
    </location>
</feature>
<feature type="binding site" evidence="1">
    <location>
        <position position="262"/>
    </location>
    <ligand>
        <name>Mn(2+)</name>
        <dbReference type="ChEBI" id="CHEBI:29035"/>
    </ligand>
</feature>
<feature type="binding site" evidence="1">
    <location>
        <position position="294"/>
    </location>
    <ligand>
        <name>Mn(2+)</name>
        <dbReference type="ChEBI" id="CHEBI:29035"/>
    </ligand>
</feature>
<feature type="binding site" evidence="1">
    <location>
        <position position="296"/>
    </location>
    <ligand>
        <name>Mn(2+)</name>
        <dbReference type="ChEBI" id="CHEBI:29035"/>
    </ligand>
</feature>
<protein>
    <recommendedName>
        <fullName evidence="1">L-rhamnose isomerase</fullName>
        <ecNumber evidence="1">5.3.1.14</ecNumber>
    </recommendedName>
</protein>